<protein>
    <recommendedName>
        <fullName evidence="1">Putative glutamate--cysteine ligase 2</fullName>
        <ecNumber evidence="1">6.3.2.2</ecNumber>
    </recommendedName>
    <alternativeName>
        <fullName evidence="1">Gamma-glutamylcysteine synthetase 2</fullName>
        <shortName evidence="1">GCS 2</shortName>
        <shortName evidence="1">Gamma-GCS 2</shortName>
    </alternativeName>
</protein>
<name>GCS2_BURP0</name>
<sequence length="371" mass="41779">MALETFVNSEPFTFGVELEIQIVNTHNYDLTKAASDLMRLIKDAKFPGNITPEITESMIELSTGICRTHDQALGELHAIRDTLVSAADQLNVGLCGGGTHAFQQWSERQIFDAPRFQYISELYGYLAKQFTVFGQHVHIGCPDADSALFLLHSMSRFIPHFIALSASSPYVQNVDTGFHSARLNSVFAFPLSGRAPFVLTWHGFEEYFTKMVNTGVVNSMKDFYWDIRPKPGYGTIEVRVMDTPLSVDRAAAIACYIQTLARYLLIDRPLKLSEDDYLVYTFNRFEACRFGLEGTCVNPQTGERRTIAEDILDTLDRIAPHAAALGSRAALDEIGALAKARVNDASWLRTIFKQEKSLNETVRQQCLRWRE</sequence>
<accession>A3NPL5</accession>
<gene>
    <name type="ordered locus">BURPS1106A_0001</name>
</gene>
<evidence type="ECO:0000255" key="1">
    <source>
        <dbReference type="HAMAP-Rule" id="MF_01609"/>
    </source>
</evidence>
<feature type="chain" id="PRO_1000069429" description="Putative glutamate--cysteine ligase 2">
    <location>
        <begin position="1"/>
        <end position="371"/>
    </location>
</feature>
<proteinExistence type="inferred from homology"/>
<comment type="function">
    <text evidence="1">ATP-dependent carboxylate-amine ligase which exhibits weak glutamate--cysteine ligase activity.</text>
</comment>
<comment type="catalytic activity">
    <reaction evidence="1">
        <text>L-cysteine + L-glutamate + ATP = gamma-L-glutamyl-L-cysteine + ADP + phosphate + H(+)</text>
        <dbReference type="Rhea" id="RHEA:13285"/>
        <dbReference type="ChEBI" id="CHEBI:15378"/>
        <dbReference type="ChEBI" id="CHEBI:29985"/>
        <dbReference type="ChEBI" id="CHEBI:30616"/>
        <dbReference type="ChEBI" id="CHEBI:35235"/>
        <dbReference type="ChEBI" id="CHEBI:43474"/>
        <dbReference type="ChEBI" id="CHEBI:58173"/>
        <dbReference type="ChEBI" id="CHEBI:456216"/>
        <dbReference type="EC" id="6.3.2.2"/>
    </reaction>
</comment>
<comment type="similarity">
    <text evidence="1">Belongs to the glutamate--cysteine ligase type 2 family. YbdK subfamily.</text>
</comment>
<reference key="1">
    <citation type="journal article" date="2010" name="Genome Biol. Evol.">
        <title>Continuing evolution of Burkholderia mallei through genome reduction and large-scale rearrangements.</title>
        <authorList>
            <person name="Losada L."/>
            <person name="Ronning C.M."/>
            <person name="DeShazer D."/>
            <person name="Woods D."/>
            <person name="Fedorova N."/>
            <person name="Kim H.S."/>
            <person name="Shabalina S.A."/>
            <person name="Pearson T.R."/>
            <person name="Brinkac L."/>
            <person name="Tan P."/>
            <person name="Nandi T."/>
            <person name="Crabtree J."/>
            <person name="Badger J."/>
            <person name="Beckstrom-Sternberg S."/>
            <person name="Saqib M."/>
            <person name="Schutzer S.E."/>
            <person name="Keim P."/>
            <person name="Nierman W.C."/>
        </authorList>
    </citation>
    <scope>NUCLEOTIDE SEQUENCE [LARGE SCALE GENOMIC DNA]</scope>
    <source>
        <strain>1106a</strain>
    </source>
</reference>
<organism>
    <name type="scientific">Burkholderia pseudomallei (strain 1106a)</name>
    <dbReference type="NCBI Taxonomy" id="357348"/>
    <lineage>
        <taxon>Bacteria</taxon>
        <taxon>Pseudomonadati</taxon>
        <taxon>Pseudomonadota</taxon>
        <taxon>Betaproteobacteria</taxon>
        <taxon>Burkholderiales</taxon>
        <taxon>Burkholderiaceae</taxon>
        <taxon>Burkholderia</taxon>
        <taxon>pseudomallei group</taxon>
    </lineage>
</organism>
<keyword id="KW-0067">ATP-binding</keyword>
<keyword id="KW-0436">Ligase</keyword>
<keyword id="KW-0547">Nucleotide-binding</keyword>
<dbReference type="EC" id="6.3.2.2" evidence="1"/>
<dbReference type="EMBL" id="CP000572">
    <property type="protein sequence ID" value="ABN90179.1"/>
    <property type="molecule type" value="Genomic_DNA"/>
</dbReference>
<dbReference type="RefSeq" id="WP_004195787.1">
    <property type="nucleotide sequence ID" value="NC_009076.1"/>
</dbReference>
<dbReference type="SMR" id="A3NPL5"/>
<dbReference type="KEGG" id="bpl:BURPS1106A_0001"/>
<dbReference type="HOGENOM" id="CLU_044848_1_1_4"/>
<dbReference type="Proteomes" id="UP000006738">
    <property type="component" value="Chromosome I"/>
</dbReference>
<dbReference type="GO" id="GO:0005524">
    <property type="term" value="F:ATP binding"/>
    <property type="evidence" value="ECO:0007669"/>
    <property type="project" value="UniProtKB-KW"/>
</dbReference>
<dbReference type="GO" id="GO:0004357">
    <property type="term" value="F:glutamate-cysteine ligase activity"/>
    <property type="evidence" value="ECO:0007669"/>
    <property type="project" value="UniProtKB-EC"/>
</dbReference>
<dbReference type="GO" id="GO:0042398">
    <property type="term" value="P:modified amino acid biosynthetic process"/>
    <property type="evidence" value="ECO:0007669"/>
    <property type="project" value="InterPro"/>
</dbReference>
<dbReference type="Gene3D" id="3.30.590.20">
    <property type="match status" value="1"/>
</dbReference>
<dbReference type="HAMAP" id="MF_01609">
    <property type="entry name" value="Glu_cys_ligase_2"/>
    <property type="match status" value="1"/>
</dbReference>
<dbReference type="InterPro" id="IPR050141">
    <property type="entry name" value="GCL_type2/YbdK_subfam"/>
</dbReference>
<dbReference type="InterPro" id="IPR006336">
    <property type="entry name" value="GCS2"/>
</dbReference>
<dbReference type="InterPro" id="IPR014746">
    <property type="entry name" value="Gln_synth/guanido_kin_cat_dom"/>
</dbReference>
<dbReference type="InterPro" id="IPR011793">
    <property type="entry name" value="YbdK"/>
</dbReference>
<dbReference type="NCBIfam" id="TIGR02050">
    <property type="entry name" value="gshA_cyan_rel"/>
    <property type="match status" value="1"/>
</dbReference>
<dbReference type="NCBIfam" id="NF010040">
    <property type="entry name" value="PRK13516.1"/>
    <property type="match status" value="1"/>
</dbReference>
<dbReference type="PANTHER" id="PTHR36510">
    <property type="entry name" value="GLUTAMATE--CYSTEINE LIGASE 2-RELATED"/>
    <property type="match status" value="1"/>
</dbReference>
<dbReference type="PANTHER" id="PTHR36510:SF1">
    <property type="entry name" value="GLUTAMATE--CYSTEINE LIGASE 2-RELATED"/>
    <property type="match status" value="1"/>
</dbReference>
<dbReference type="Pfam" id="PF04107">
    <property type="entry name" value="GCS2"/>
    <property type="match status" value="1"/>
</dbReference>
<dbReference type="SUPFAM" id="SSF55931">
    <property type="entry name" value="Glutamine synthetase/guanido kinase"/>
    <property type="match status" value="1"/>
</dbReference>